<keyword id="KW-0067">ATP-binding</keyword>
<keyword id="KW-0131">Cell cycle</keyword>
<keyword id="KW-0132">Cell division</keyword>
<keyword id="KW-0133">Cell shape</keyword>
<keyword id="KW-0961">Cell wall biogenesis/degradation</keyword>
<keyword id="KW-0963">Cytoplasm</keyword>
<keyword id="KW-0436">Ligase</keyword>
<keyword id="KW-0547">Nucleotide-binding</keyword>
<keyword id="KW-0573">Peptidoglycan synthesis</keyword>
<sequence length="458" mass="51495">MKSNFSKFKDFIKYKKVAVVGIGVSNRPLIKFLVKLGAKVTAFDKKHREKLGSISLELEEIGVDLVLGENYLDKLDGYDVIFKTPSMRIDRPEFVKAKEAGAYITSEMEEFIKYCPAKVFGITGSDGKTTTTTLVYEMLKKEGYRTWVGGNIGTPLFANIEEMKEDHMVVLELSSFQLMTMDVSPEISLITNLSPNHLDVHKDFEEYVWAKKNIFKYQSSDNLLVLNKDDDLTNGMENEALGDVLKFSLVEKVYNGACLSNNKLTIQGKEICDSKDIKLKGRHNIANLLAAFCMVNKYVSIDSMKYVATNFSGVEHRCEFIREVNEVKYYNDSIASSPSRTLAGLNSFEKPVILIAGGYDKKIPFEPLAEGGYDKIKILILMGDTKNKIKSAFEKVISHKKCEMEIVIVNSMEEAVKVADNMAEKGDIITLSPACASFDMYPNFEIRGNEFKNIVNSL</sequence>
<organism>
    <name type="scientific">Clostridium botulinum (strain Loch Maree / Type A3)</name>
    <dbReference type="NCBI Taxonomy" id="498214"/>
    <lineage>
        <taxon>Bacteria</taxon>
        <taxon>Bacillati</taxon>
        <taxon>Bacillota</taxon>
        <taxon>Clostridia</taxon>
        <taxon>Eubacteriales</taxon>
        <taxon>Clostridiaceae</taxon>
        <taxon>Clostridium</taxon>
    </lineage>
</organism>
<evidence type="ECO:0000255" key="1">
    <source>
        <dbReference type="HAMAP-Rule" id="MF_00639"/>
    </source>
</evidence>
<reference key="1">
    <citation type="journal article" date="2007" name="PLoS ONE">
        <title>Analysis of the neurotoxin complex genes in Clostridium botulinum A1-A4 and B1 strains: BoNT/A3, /Ba4 and /B1 clusters are located within plasmids.</title>
        <authorList>
            <person name="Smith T.J."/>
            <person name="Hill K.K."/>
            <person name="Foley B.T."/>
            <person name="Detter J.C."/>
            <person name="Munk A.C."/>
            <person name="Bruce D.C."/>
            <person name="Doggett N.A."/>
            <person name="Smith L.A."/>
            <person name="Marks J.D."/>
            <person name="Xie G."/>
            <person name="Brettin T.S."/>
        </authorList>
    </citation>
    <scope>NUCLEOTIDE SEQUENCE [LARGE SCALE GENOMIC DNA]</scope>
    <source>
        <strain>Loch Maree / Type A3</strain>
    </source>
</reference>
<comment type="function">
    <text evidence="1">Cell wall formation. Catalyzes the addition of glutamate to the nucleotide precursor UDP-N-acetylmuramoyl-L-alanine (UMA).</text>
</comment>
<comment type="catalytic activity">
    <reaction evidence="1">
        <text>UDP-N-acetyl-alpha-D-muramoyl-L-alanine + D-glutamate + ATP = UDP-N-acetyl-alpha-D-muramoyl-L-alanyl-D-glutamate + ADP + phosphate + H(+)</text>
        <dbReference type="Rhea" id="RHEA:16429"/>
        <dbReference type="ChEBI" id="CHEBI:15378"/>
        <dbReference type="ChEBI" id="CHEBI:29986"/>
        <dbReference type="ChEBI" id="CHEBI:30616"/>
        <dbReference type="ChEBI" id="CHEBI:43474"/>
        <dbReference type="ChEBI" id="CHEBI:83898"/>
        <dbReference type="ChEBI" id="CHEBI:83900"/>
        <dbReference type="ChEBI" id="CHEBI:456216"/>
        <dbReference type="EC" id="6.3.2.9"/>
    </reaction>
</comment>
<comment type="pathway">
    <text evidence="1">Cell wall biogenesis; peptidoglycan biosynthesis.</text>
</comment>
<comment type="subcellular location">
    <subcellularLocation>
        <location evidence="1">Cytoplasm</location>
    </subcellularLocation>
</comment>
<comment type="similarity">
    <text evidence="1">Belongs to the MurCDEF family.</text>
</comment>
<proteinExistence type="inferred from homology"/>
<feature type="chain" id="PRO_1000130846" description="UDP-N-acetylmuramoylalanine--D-glutamate ligase">
    <location>
        <begin position="1"/>
        <end position="458"/>
    </location>
</feature>
<feature type="binding site" evidence="1">
    <location>
        <begin position="124"/>
        <end position="130"/>
    </location>
    <ligand>
        <name>ATP</name>
        <dbReference type="ChEBI" id="CHEBI:30616"/>
    </ligand>
</feature>
<dbReference type="EC" id="6.3.2.9" evidence="1"/>
<dbReference type="EMBL" id="CP000962">
    <property type="protein sequence ID" value="ACA56488.1"/>
    <property type="molecule type" value="Genomic_DNA"/>
</dbReference>
<dbReference type="RefSeq" id="WP_012344353.1">
    <property type="nucleotide sequence ID" value="NC_010520.1"/>
</dbReference>
<dbReference type="SMR" id="B1KTB9"/>
<dbReference type="KEGG" id="cbl:CLK_2981"/>
<dbReference type="HOGENOM" id="CLU_032540_0_1_9"/>
<dbReference type="UniPathway" id="UPA00219"/>
<dbReference type="GO" id="GO:0005737">
    <property type="term" value="C:cytoplasm"/>
    <property type="evidence" value="ECO:0007669"/>
    <property type="project" value="UniProtKB-SubCell"/>
</dbReference>
<dbReference type="GO" id="GO:0005524">
    <property type="term" value="F:ATP binding"/>
    <property type="evidence" value="ECO:0007669"/>
    <property type="project" value="UniProtKB-UniRule"/>
</dbReference>
<dbReference type="GO" id="GO:0008764">
    <property type="term" value="F:UDP-N-acetylmuramoylalanine-D-glutamate ligase activity"/>
    <property type="evidence" value="ECO:0007669"/>
    <property type="project" value="UniProtKB-UniRule"/>
</dbReference>
<dbReference type="GO" id="GO:0051301">
    <property type="term" value="P:cell division"/>
    <property type="evidence" value="ECO:0007669"/>
    <property type="project" value="UniProtKB-KW"/>
</dbReference>
<dbReference type="GO" id="GO:0071555">
    <property type="term" value="P:cell wall organization"/>
    <property type="evidence" value="ECO:0007669"/>
    <property type="project" value="UniProtKB-KW"/>
</dbReference>
<dbReference type="GO" id="GO:0009252">
    <property type="term" value="P:peptidoglycan biosynthetic process"/>
    <property type="evidence" value="ECO:0007669"/>
    <property type="project" value="UniProtKB-UniRule"/>
</dbReference>
<dbReference type="GO" id="GO:0008360">
    <property type="term" value="P:regulation of cell shape"/>
    <property type="evidence" value="ECO:0007669"/>
    <property type="project" value="UniProtKB-KW"/>
</dbReference>
<dbReference type="Gene3D" id="3.90.190.20">
    <property type="entry name" value="Mur ligase, C-terminal domain"/>
    <property type="match status" value="1"/>
</dbReference>
<dbReference type="Gene3D" id="3.40.1190.10">
    <property type="entry name" value="Mur-like, catalytic domain"/>
    <property type="match status" value="1"/>
</dbReference>
<dbReference type="Gene3D" id="3.40.50.720">
    <property type="entry name" value="NAD(P)-binding Rossmann-like Domain"/>
    <property type="match status" value="1"/>
</dbReference>
<dbReference type="HAMAP" id="MF_00639">
    <property type="entry name" value="MurD"/>
    <property type="match status" value="1"/>
</dbReference>
<dbReference type="InterPro" id="IPR036565">
    <property type="entry name" value="Mur-like_cat_sf"/>
</dbReference>
<dbReference type="InterPro" id="IPR004101">
    <property type="entry name" value="Mur_ligase_C"/>
</dbReference>
<dbReference type="InterPro" id="IPR036615">
    <property type="entry name" value="Mur_ligase_C_dom_sf"/>
</dbReference>
<dbReference type="InterPro" id="IPR013221">
    <property type="entry name" value="Mur_ligase_cen"/>
</dbReference>
<dbReference type="InterPro" id="IPR005762">
    <property type="entry name" value="MurD"/>
</dbReference>
<dbReference type="NCBIfam" id="TIGR01087">
    <property type="entry name" value="murD"/>
    <property type="match status" value="1"/>
</dbReference>
<dbReference type="PANTHER" id="PTHR43692">
    <property type="entry name" value="UDP-N-ACETYLMURAMOYLALANINE--D-GLUTAMATE LIGASE"/>
    <property type="match status" value="1"/>
</dbReference>
<dbReference type="PANTHER" id="PTHR43692:SF1">
    <property type="entry name" value="UDP-N-ACETYLMURAMOYLALANINE--D-GLUTAMATE LIGASE"/>
    <property type="match status" value="1"/>
</dbReference>
<dbReference type="Pfam" id="PF02875">
    <property type="entry name" value="Mur_ligase_C"/>
    <property type="match status" value="1"/>
</dbReference>
<dbReference type="Pfam" id="PF08245">
    <property type="entry name" value="Mur_ligase_M"/>
    <property type="match status" value="1"/>
</dbReference>
<dbReference type="Pfam" id="PF21799">
    <property type="entry name" value="MurD-like_N"/>
    <property type="match status" value="1"/>
</dbReference>
<dbReference type="SUPFAM" id="SSF51984">
    <property type="entry name" value="MurCD N-terminal domain"/>
    <property type="match status" value="1"/>
</dbReference>
<dbReference type="SUPFAM" id="SSF53623">
    <property type="entry name" value="MurD-like peptide ligases, catalytic domain"/>
    <property type="match status" value="1"/>
</dbReference>
<dbReference type="SUPFAM" id="SSF53244">
    <property type="entry name" value="MurD-like peptide ligases, peptide-binding domain"/>
    <property type="match status" value="1"/>
</dbReference>
<accession>B1KTB9</accession>
<name>MURD_CLOBM</name>
<gene>
    <name evidence="1" type="primary">murD</name>
    <name type="ordered locus">CLK_2981</name>
</gene>
<protein>
    <recommendedName>
        <fullName evidence="1">UDP-N-acetylmuramoylalanine--D-glutamate ligase</fullName>
        <ecNumber evidence="1">6.3.2.9</ecNumber>
    </recommendedName>
    <alternativeName>
        <fullName evidence="1">D-glutamic acid-adding enzyme</fullName>
    </alternativeName>
    <alternativeName>
        <fullName evidence="1">UDP-N-acetylmuramoyl-L-alanyl-D-glutamate synthetase</fullName>
    </alternativeName>
</protein>